<keyword id="KW-0002">3D-structure</keyword>
<keyword id="KW-1185">Reference proteome</keyword>
<keyword id="KW-0687">Ribonucleoprotein</keyword>
<keyword id="KW-0689">Ribosomal protein</keyword>
<keyword id="KW-0694">RNA-binding</keyword>
<keyword id="KW-0699">rRNA-binding</keyword>
<proteinExistence type="evidence at protein level"/>
<feature type="chain" id="PRO_0000176790" description="Small ribosomal subunit protein bS6">
    <location>
        <begin position="1"/>
        <end position="97"/>
    </location>
</feature>
<name>RS6_LISMO</name>
<evidence type="ECO:0000255" key="1">
    <source>
        <dbReference type="HAMAP-Rule" id="MF_00360"/>
    </source>
</evidence>
<evidence type="ECO:0000305" key="2"/>
<protein>
    <recommendedName>
        <fullName evidence="1">Small ribosomal subunit protein bS6</fullName>
    </recommendedName>
    <alternativeName>
        <fullName evidence="2">30S ribosomal protein S6</fullName>
    </alternativeName>
</protein>
<accession>Q8YAR9</accession>
<dbReference type="EMBL" id="AL591973">
    <property type="protein sequence ID" value="CAC98259.1"/>
    <property type="molecule type" value="Genomic_DNA"/>
</dbReference>
<dbReference type="PIR" id="AE1080">
    <property type="entry name" value="AE1080"/>
</dbReference>
<dbReference type="RefSeq" id="NP_463577.1">
    <property type="nucleotide sequence ID" value="NC_003210.1"/>
</dbReference>
<dbReference type="RefSeq" id="WP_003721667.1">
    <property type="nucleotide sequence ID" value="NZ_CP149495.1"/>
</dbReference>
<dbReference type="PDB" id="7NHN">
    <property type="method" value="EM"/>
    <property type="resolution" value="2.90 A"/>
    <property type="chains" value="g=1-97"/>
</dbReference>
<dbReference type="PDBsum" id="7NHN"/>
<dbReference type="EMDB" id="EMD-12334"/>
<dbReference type="SMR" id="Q8YAR9"/>
<dbReference type="STRING" id="169963.gene:17592679"/>
<dbReference type="PaxDb" id="169963-lmo0044"/>
<dbReference type="EnsemblBacteria" id="CAC98259">
    <property type="protein sequence ID" value="CAC98259"/>
    <property type="gene ID" value="CAC98259"/>
</dbReference>
<dbReference type="GeneID" id="93237942"/>
<dbReference type="GeneID" id="985454"/>
<dbReference type="KEGG" id="lmo:lmo0044"/>
<dbReference type="PATRIC" id="fig|169963.11.peg.45"/>
<dbReference type="eggNOG" id="COG0360">
    <property type="taxonomic scope" value="Bacteria"/>
</dbReference>
<dbReference type="HOGENOM" id="CLU_113441_5_3_9"/>
<dbReference type="OrthoDB" id="9812702at2"/>
<dbReference type="PhylomeDB" id="Q8YAR9"/>
<dbReference type="BioCyc" id="LMON169963:LMO0044-MONOMER"/>
<dbReference type="Proteomes" id="UP000000817">
    <property type="component" value="Chromosome"/>
</dbReference>
<dbReference type="GO" id="GO:0005737">
    <property type="term" value="C:cytoplasm"/>
    <property type="evidence" value="ECO:0007669"/>
    <property type="project" value="UniProtKB-ARBA"/>
</dbReference>
<dbReference type="GO" id="GO:1990904">
    <property type="term" value="C:ribonucleoprotein complex"/>
    <property type="evidence" value="ECO:0007669"/>
    <property type="project" value="UniProtKB-KW"/>
</dbReference>
<dbReference type="GO" id="GO:0005840">
    <property type="term" value="C:ribosome"/>
    <property type="evidence" value="ECO:0007669"/>
    <property type="project" value="UniProtKB-KW"/>
</dbReference>
<dbReference type="GO" id="GO:0070181">
    <property type="term" value="F:small ribosomal subunit rRNA binding"/>
    <property type="evidence" value="ECO:0000318"/>
    <property type="project" value="GO_Central"/>
</dbReference>
<dbReference type="GO" id="GO:0003735">
    <property type="term" value="F:structural constituent of ribosome"/>
    <property type="evidence" value="ECO:0000318"/>
    <property type="project" value="GO_Central"/>
</dbReference>
<dbReference type="GO" id="GO:0006412">
    <property type="term" value="P:translation"/>
    <property type="evidence" value="ECO:0007669"/>
    <property type="project" value="UniProtKB-UniRule"/>
</dbReference>
<dbReference type="CDD" id="cd00473">
    <property type="entry name" value="bS6"/>
    <property type="match status" value="1"/>
</dbReference>
<dbReference type="FunFam" id="3.30.70.60:FF:000002">
    <property type="entry name" value="30S ribosomal protein S6"/>
    <property type="match status" value="1"/>
</dbReference>
<dbReference type="Gene3D" id="3.30.70.60">
    <property type="match status" value="1"/>
</dbReference>
<dbReference type="HAMAP" id="MF_00360">
    <property type="entry name" value="Ribosomal_bS6"/>
    <property type="match status" value="1"/>
</dbReference>
<dbReference type="InterPro" id="IPR000529">
    <property type="entry name" value="Ribosomal_bS6"/>
</dbReference>
<dbReference type="InterPro" id="IPR020815">
    <property type="entry name" value="Ribosomal_bS6_CS"/>
</dbReference>
<dbReference type="InterPro" id="IPR035980">
    <property type="entry name" value="Ribosomal_bS6_sf"/>
</dbReference>
<dbReference type="InterPro" id="IPR020814">
    <property type="entry name" value="Ribosomal_S6_plastid/chlpt"/>
</dbReference>
<dbReference type="InterPro" id="IPR014717">
    <property type="entry name" value="Transl_elong_EF1B/ribsomal_bS6"/>
</dbReference>
<dbReference type="NCBIfam" id="TIGR00166">
    <property type="entry name" value="S6"/>
    <property type="match status" value="1"/>
</dbReference>
<dbReference type="PANTHER" id="PTHR21011">
    <property type="entry name" value="MITOCHONDRIAL 28S RIBOSOMAL PROTEIN S6"/>
    <property type="match status" value="1"/>
</dbReference>
<dbReference type="PANTHER" id="PTHR21011:SF1">
    <property type="entry name" value="SMALL RIBOSOMAL SUBUNIT PROTEIN BS6M"/>
    <property type="match status" value="1"/>
</dbReference>
<dbReference type="Pfam" id="PF01250">
    <property type="entry name" value="Ribosomal_S6"/>
    <property type="match status" value="1"/>
</dbReference>
<dbReference type="SUPFAM" id="SSF54995">
    <property type="entry name" value="Ribosomal protein S6"/>
    <property type="match status" value="1"/>
</dbReference>
<dbReference type="PROSITE" id="PS01048">
    <property type="entry name" value="RIBOSOMAL_S6"/>
    <property type="match status" value="1"/>
</dbReference>
<comment type="function">
    <text evidence="1">Binds together with bS18 to 16S ribosomal RNA.</text>
</comment>
<comment type="similarity">
    <text evidence="1">Belongs to the bacterial ribosomal protein bS6 family.</text>
</comment>
<gene>
    <name evidence="1" type="primary">rpsF</name>
    <name type="ordered locus">lmo0044</name>
</gene>
<organism>
    <name type="scientific">Listeria monocytogenes serovar 1/2a (strain ATCC BAA-679 / EGD-e)</name>
    <dbReference type="NCBI Taxonomy" id="169963"/>
    <lineage>
        <taxon>Bacteria</taxon>
        <taxon>Bacillati</taxon>
        <taxon>Bacillota</taxon>
        <taxon>Bacilli</taxon>
        <taxon>Bacillales</taxon>
        <taxon>Listeriaceae</taxon>
        <taxon>Listeria</taxon>
    </lineage>
</organism>
<sequence length="97" mass="11507">MARKYEIMYIIRPNIEEDEKKAVVERFDGILTENGAEIIESKEWGKRRLAYEINDYRDGFYHIVKLNADKADSINEFDRLAKISDDIIRHMVIKEEA</sequence>
<reference key="1">
    <citation type="journal article" date="2001" name="Science">
        <title>Comparative genomics of Listeria species.</title>
        <authorList>
            <person name="Glaser P."/>
            <person name="Frangeul L."/>
            <person name="Buchrieser C."/>
            <person name="Rusniok C."/>
            <person name="Amend A."/>
            <person name="Baquero F."/>
            <person name="Berche P."/>
            <person name="Bloecker H."/>
            <person name="Brandt P."/>
            <person name="Chakraborty T."/>
            <person name="Charbit A."/>
            <person name="Chetouani F."/>
            <person name="Couve E."/>
            <person name="de Daruvar A."/>
            <person name="Dehoux P."/>
            <person name="Domann E."/>
            <person name="Dominguez-Bernal G."/>
            <person name="Duchaud E."/>
            <person name="Durant L."/>
            <person name="Dussurget O."/>
            <person name="Entian K.-D."/>
            <person name="Fsihi H."/>
            <person name="Garcia-del Portillo F."/>
            <person name="Garrido P."/>
            <person name="Gautier L."/>
            <person name="Goebel W."/>
            <person name="Gomez-Lopez N."/>
            <person name="Hain T."/>
            <person name="Hauf J."/>
            <person name="Jackson D."/>
            <person name="Jones L.-M."/>
            <person name="Kaerst U."/>
            <person name="Kreft J."/>
            <person name="Kuhn M."/>
            <person name="Kunst F."/>
            <person name="Kurapkat G."/>
            <person name="Madueno E."/>
            <person name="Maitournam A."/>
            <person name="Mata Vicente J."/>
            <person name="Ng E."/>
            <person name="Nedjari H."/>
            <person name="Nordsiek G."/>
            <person name="Novella S."/>
            <person name="de Pablos B."/>
            <person name="Perez-Diaz J.-C."/>
            <person name="Purcell R."/>
            <person name="Remmel B."/>
            <person name="Rose M."/>
            <person name="Schlueter T."/>
            <person name="Simoes N."/>
            <person name="Tierrez A."/>
            <person name="Vazquez-Boland J.-A."/>
            <person name="Voss H."/>
            <person name="Wehland J."/>
            <person name="Cossart P."/>
        </authorList>
    </citation>
    <scope>NUCLEOTIDE SEQUENCE [LARGE SCALE GENOMIC DNA]</scope>
    <source>
        <strain>ATCC BAA-679 / EGD-e</strain>
    </source>
</reference>